<reference key="1">
    <citation type="journal article" date="1996" name="Mol. Biol. Evol.">
        <title>The complete mitochondrial DNA sequence of the greater Indian rhinoceros, Rhinoceros unicornis, and the Phylogenetic relationship among Carnivora, Perissodactyla, and Artiodactyla (+ Cetacea).</title>
        <authorList>
            <person name="Xu X."/>
            <person name="Janke A."/>
            <person name="Arnason U."/>
        </authorList>
    </citation>
    <scope>NUCLEOTIDE SEQUENCE [GENOMIC DNA]</scope>
    <source>
        <tissue>Kidney</tissue>
    </source>
</reference>
<keyword id="KW-0249">Electron transport</keyword>
<keyword id="KW-0472">Membrane</keyword>
<keyword id="KW-0496">Mitochondrion</keyword>
<keyword id="KW-0999">Mitochondrion inner membrane</keyword>
<keyword id="KW-0520">NAD</keyword>
<keyword id="KW-0679">Respiratory chain</keyword>
<keyword id="KW-1278">Translocase</keyword>
<keyword id="KW-0812">Transmembrane</keyword>
<keyword id="KW-1133">Transmembrane helix</keyword>
<keyword id="KW-0813">Transport</keyword>
<keyword id="KW-0830">Ubiquinone</keyword>
<gene>
    <name type="primary">MT-ND4</name>
    <name type="synonym">MTND4</name>
    <name type="synonym">NADH4</name>
    <name type="synonym">ND4</name>
</gene>
<dbReference type="EC" id="7.1.1.2" evidence="1"/>
<dbReference type="EMBL" id="X97336">
    <property type="protein sequence ID" value="CAA66010.1"/>
    <property type="molecule type" value="Genomic_DNA"/>
</dbReference>
<dbReference type="PIR" id="T11256">
    <property type="entry name" value="T11256"/>
</dbReference>
<dbReference type="RefSeq" id="NP_007377.1">
    <property type="nucleotide sequence ID" value="NC_001779.1"/>
</dbReference>
<dbReference type="SMR" id="Q96068"/>
<dbReference type="GeneID" id="808047"/>
<dbReference type="CTD" id="4538"/>
<dbReference type="GO" id="GO:0005743">
    <property type="term" value="C:mitochondrial inner membrane"/>
    <property type="evidence" value="ECO:0000250"/>
    <property type="project" value="UniProtKB"/>
</dbReference>
<dbReference type="GO" id="GO:0008137">
    <property type="term" value="F:NADH dehydrogenase (ubiquinone) activity"/>
    <property type="evidence" value="ECO:0000250"/>
    <property type="project" value="UniProtKB"/>
</dbReference>
<dbReference type="GO" id="GO:0048039">
    <property type="term" value="F:ubiquinone binding"/>
    <property type="evidence" value="ECO:0007669"/>
    <property type="project" value="TreeGrafter"/>
</dbReference>
<dbReference type="GO" id="GO:0015990">
    <property type="term" value="P:electron transport coupled proton transport"/>
    <property type="evidence" value="ECO:0007669"/>
    <property type="project" value="TreeGrafter"/>
</dbReference>
<dbReference type="GO" id="GO:0006120">
    <property type="term" value="P:mitochondrial electron transport, NADH to ubiquinone"/>
    <property type="evidence" value="ECO:0000250"/>
    <property type="project" value="UniProtKB"/>
</dbReference>
<dbReference type="GO" id="GO:0032981">
    <property type="term" value="P:mitochondrial respiratory chain complex I assembly"/>
    <property type="evidence" value="ECO:0000250"/>
    <property type="project" value="UniProtKB"/>
</dbReference>
<dbReference type="InterPro" id="IPR000260">
    <property type="entry name" value="NADH4_N"/>
</dbReference>
<dbReference type="InterPro" id="IPR010227">
    <property type="entry name" value="NADH_Q_OxRdtase_chainM/4"/>
</dbReference>
<dbReference type="InterPro" id="IPR003918">
    <property type="entry name" value="NADH_UbQ_OxRdtase"/>
</dbReference>
<dbReference type="InterPro" id="IPR001750">
    <property type="entry name" value="ND/Mrp_TM"/>
</dbReference>
<dbReference type="NCBIfam" id="TIGR01972">
    <property type="entry name" value="NDH_I_M"/>
    <property type="match status" value="1"/>
</dbReference>
<dbReference type="PANTHER" id="PTHR43507">
    <property type="entry name" value="NADH-UBIQUINONE OXIDOREDUCTASE CHAIN 4"/>
    <property type="match status" value="1"/>
</dbReference>
<dbReference type="PANTHER" id="PTHR43507:SF20">
    <property type="entry name" value="NADH-UBIQUINONE OXIDOREDUCTASE CHAIN 4"/>
    <property type="match status" value="1"/>
</dbReference>
<dbReference type="Pfam" id="PF01059">
    <property type="entry name" value="Oxidored_q5_N"/>
    <property type="match status" value="1"/>
</dbReference>
<dbReference type="Pfam" id="PF00361">
    <property type="entry name" value="Proton_antipo_M"/>
    <property type="match status" value="1"/>
</dbReference>
<dbReference type="PRINTS" id="PR01437">
    <property type="entry name" value="NUOXDRDTASE4"/>
</dbReference>
<name>NU4M_RHIUN</name>
<organism>
    <name type="scientific">Rhinoceros unicornis</name>
    <name type="common">Greater Indian rhinoceros</name>
    <dbReference type="NCBI Taxonomy" id="9809"/>
    <lineage>
        <taxon>Eukaryota</taxon>
        <taxon>Metazoa</taxon>
        <taxon>Chordata</taxon>
        <taxon>Craniata</taxon>
        <taxon>Vertebrata</taxon>
        <taxon>Euteleostomi</taxon>
        <taxon>Mammalia</taxon>
        <taxon>Eutheria</taxon>
        <taxon>Laurasiatheria</taxon>
        <taxon>Perissodactyla</taxon>
        <taxon>Rhinocerotidae</taxon>
        <taxon>Rhinoceros</taxon>
    </lineage>
</organism>
<sequence length="459" mass="51889">MLKIIIPTLMLMPLTWLSKNNMIWINTTAYSLLISLISLSFLNQFNEDSLYISLTFFSDPLSAPLLVLTTWLLPLMIMASQHHLSKEPITRKKLYITMLIMLQLLLIMTFTATELILFYVLFEATLIPTLIIITRWGNQTERLNAGFYFLFYTLTGSLPLLIALIHIQNITGSLNLLLIQYSAQTLPNSWSNTFLWLACMMGFMVKMPLYGLHLWLPKAHVEAPIAGSMVLAAILLKLGGYGMLRITMILNPLTSHMAYPFLMLSLWGMIMTSSICLRQTDLKSLIAYSSVSHMALVIVAILIQTPWSYMGATALMIAHGLTSSVLFCLANSNYERTHSRTMILARGLQTLLPLMAMWWLLASLTNLALPPTINLVGELFVVVSSFSWSNLTIILMGTNIIITALYSLYMLIMTQRGKYTYHINNIKPSFTRENMLMALHLLPLLLLSLNPKIILGTMY</sequence>
<comment type="function">
    <text evidence="1">Core subunit of the mitochondrial membrane respiratory chain NADH dehydrogenase (Complex I) which catalyzes electron transfer from NADH through the respiratory chain, using ubiquinone as an electron acceptor. Essential for the catalytic activity and assembly of complex I.</text>
</comment>
<comment type="catalytic activity">
    <reaction evidence="1">
        <text>a ubiquinone + NADH + 5 H(+)(in) = a ubiquinol + NAD(+) + 4 H(+)(out)</text>
        <dbReference type="Rhea" id="RHEA:29091"/>
        <dbReference type="Rhea" id="RHEA-COMP:9565"/>
        <dbReference type="Rhea" id="RHEA-COMP:9566"/>
        <dbReference type="ChEBI" id="CHEBI:15378"/>
        <dbReference type="ChEBI" id="CHEBI:16389"/>
        <dbReference type="ChEBI" id="CHEBI:17976"/>
        <dbReference type="ChEBI" id="CHEBI:57540"/>
        <dbReference type="ChEBI" id="CHEBI:57945"/>
        <dbReference type="EC" id="7.1.1.2"/>
    </reaction>
</comment>
<comment type="subunit">
    <text evidence="2">Core subunit of respiratory chain NADH dehydrogenase (Complex I) which is composed of 45 different subunits.</text>
</comment>
<comment type="subcellular location">
    <subcellularLocation>
        <location evidence="2">Mitochondrion inner membrane</location>
        <topology evidence="3">Multi-pass membrane protein</topology>
    </subcellularLocation>
</comment>
<comment type="similarity">
    <text evidence="4">Belongs to the complex I subunit 4 family.</text>
</comment>
<proteinExistence type="inferred from homology"/>
<feature type="chain" id="PRO_0000117983" description="NADH-ubiquinone oxidoreductase chain 4">
    <location>
        <begin position="1"/>
        <end position="459"/>
    </location>
</feature>
<feature type="transmembrane region" description="Helical" evidence="3">
    <location>
        <begin position="22"/>
        <end position="42"/>
    </location>
</feature>
<feature type="transmembrane region" description="Helical" evidence="3">
    <location>
        <begin position="60"/>
        <end position="80"/>
    </location>
</feature>
<feature type="transmembrane region" description="Helical" evidence="3">
    <location>
        <begin position="92"/>
        <end position="112"/>
    </location>
</feature>
<feature type="transmembrane region" description="Helical" evidence="3">
    <location>
        <begin position="113"/>
        <end position="133"/>
    </location>
</feature>
<feature type="transmembrane region" description="Helical" evidence="3">
    <location>
        <begin position="145"/>
        <end position="165"/>
    </location>
</feature>
<feature type="transmembrane region" description="Helical" evidence="3">
    <location>
        <begin position="194"/>
        <end position="214"/>
    </location>
</feature>
<feature type="transmembrane region" description="Helical" evidence="3">
    <location>
        <begin position="224"/>
        <end position="244"/>
    </location>
</feature>
<feature type="transmembrane region" description="Helical" evidence="3">
    <location>
        <begin position="257"/>
        <end position="277"/>
    </location>
</feature>
<feature type="transmembrane region" description="Helical" evidence="3">
    <location>
        <begin position="284"/>
        <end position="303"/>
    </location>
</feature>
<feature type="transmembrane region" description="Helical" evidence="3">
    <location>
        <begin position="308"/>
        <end position="330"/>
    </location>
</feature>
<feature type="transmembrane region" description="Helical" evidence="3">
    <location>
        <begin position="351"/>
        <end position="371"/>
    </location>
</feature>
<feature type="transmembrane region" description="Helical" evidence="3">
    <location>
        <begin position="393"/>
        <end position="413"/>
    </location>
</feature>
<feature type="transmembrane region" description="Helical" evidence="3">
    <location>
        <begin position="435"/>
        <end position="455"/>
    </location>
</feature>
<protein>
    <recommendedName>
        <fullName>NADH-ubiquinone oxidoreductase chain 4</fullName>
        <ecNumber evidence="1">7.1.1.2</ecNumber>
    </recommendedName>
    <alternativeName>
        <fullName>NADH dehydrogenase subunit 4</fullName>
    </alternativeName>
</protein>
<evidence type="ECO:0000250" key="1">
    <source>
        <dbReference type="UniProtKB" id="P03905"/>
    </source>
</evidence>
<evidence type="ECO:0000250" key="2">
    <source>
        <dbReference type="UniProtKB" id="P03910"/>
    </source>
</evidence>
<evidence type="ECO:0000255" key="3"/>
<evidence type="ECO:0000305" key="4"/>
<geneLocation type="mitochondrion"/>
<accession>Q96068</accession>